<organism>
    <name type="scientific">Sinorhizobium fredii (strain NBRC 101917 / NGR234)</name>
    <dbReference type="NCBI Taxonomy" id="394"/>
    <lineage>
        <taxon>Bacteria</taxon>
        <taxon>Pseudomonadati</taxon>
        <taxon>Pseudomonadota</taxon>
        <taxon>Alphaproteobacteria</taxon>
        <taxon>Hyphomicrobiales</taxon>
        <taxon>Rhizobiaceae</taxon>
        <taxon>Sinorhizobium/Ensifer group</taxon>
        <taxon>Sinorhizobium</taxon>
    </lineage>
</organism>
<evidence type="ECO:0000255" key="1">
    <source>
        <dbReference type="HAMAP-Rule" id="MF_01395"/>
    </source>
</evidence>
<evidence type="ECO:0000255" key="2">
    <source>
        <dbReference type="PROSITE-ProRule" id="PRU01136"/>
    </source>
</evidence>
<proteinExistence type="inferred from homology"/>
<sequence length="304" mass="33575">MNWITNYVRPKINSMLGRREVPENLWIKCPETGEMVFHRDLEENKWVIPQSGHHMKMPARARLKDLFDGGIYETLPQPKVAQDPLKFRDSKKYLDRLRDSRAKTELEDTIVAGLGLVQGVKLVAVVHEFNFIGGSLGMAAGEAIIRAFEKAIAEKCPLVMFPASGGARMQEGILSLMQLPRTTVAVNLLKEAGLPYIVVLTNPTTGGVTASYAMLGDIHLAEPGAEIGFAGKRVIEQTLREKLPDGFQTSEYLLEHGMVDMVVKRHDLPATLARVLKILMKKPVEAARRESGSQVSALPVAARA</sequence>
<name>ACCD_SINFN</name>
<accession>C3MBA1</accession>
<feature type="chain" id="PRO_0000389831" description="Acetyl-coenzyme A carboxylase carboxyl transferase subunit beta">
    <location>
        <begin position="1"/>
        <end position="304"/>
    </location>
</feature>
<feature type="domain" description="CoA carboxyltransferase N-terminal" evidence="2">
    <location>
        <begin position="25"/>
        <end position="294"/>
    </location>
</feature>
<keyword id="KW-0067">ATP-binding</keyword>
<keyword id="KW-0963">Cytoplasm</keyword>
<keyword id="KW-0275">Fatty acid biosynthesis</keyword>
<keyword id="KW-0276">Fatty acid metabolism</keyword>
<keyword id="KW-0444">Lipid biosynthesis</keyword>
<keyword id="KW-0443">Lipid metabolism</keyword>
<keyword id="KW-0547">Nucleotide-binding</keyword>
<keyword id="KW-1185">Reference proteome</keyword>
<keyword id="KW-0808">Transferase</keyword>
<gene>
    <name evidence="1" type="primary">accD</name>
    <name type="ordered locus">NGR_c33800</name>
</gene>
<dbReference type="EC" id="2.1.3.15" evidence="1"/>
<dbReference type="EMBL" id="CP001389">
    <property type="protein sequence ID" value="ACP27110.1"/>
    <property type="molecule type" value="Genomic_DNA"/>
</dbReference>
<dbReference type="RefSeq" id="WP_012709857.1">
    <property type="nucleotide sequence ID" value="NC_012587.1"/>
</dbReference>
<dbReference type="RefSeq" id="YP_002827863.1">
    <property type="nucleotide sequence ID" value="NC_012587.1"/>
</dbReference>
<dbReference type="SMR" id="C3MBA1"/>
<dbReference type="STRING" id="394.NGR_c33800"/>
<dbReference type="KEGG" id="rhi:NGR_c33800"/>
<dbReference type="PATRIC" id="fig|394.7.peg.6228"/>
<dbReference type="eggNOG" id="COG0777">
    <property type="taxonomic scope" value="Bacteria"/>
</dbReference>
<dbReference type="HOGENOM" id="CLU_015486_1_0_5"/>
<dbReference type="OrthoDB" id="9772975at2"/>
<dbReference type="UniPathway" id="UPA00655">
    <property type="reaction ID" value="UER00711"/>
</dbReference>
<dbReference type="Proteomes" id="UP000001054">
    <property type="component" value="Chromosome"/>
</dbReference>
<dbReference type="GO" id="GO:0009329">
    <property type="term" value="C:acetate CoA-transferase complex"/>
    <property type="evidence" value="ECO:0007669"/>
    <property type="project" value="TreeGrafter"/>
</dbReference>
<dbReference type="GO" id="GO:0003989">
    <property type="term" value="F:acetyl-CoA carboxylase activity"/>
    <property type="evidence" value="ECO:0007669"/>
    <property type="project" value="InterPro"/>
</dbReference>
<dbReference type="GO" id="GO:0005524">
    <property type="term" value="F:ATP binding"/>
    <property type="evidence" value="ECO:0007669"/>
    <property type="project" value="UniProtKB-KW"/>
</dbReference>
<dbReference type="GO" id="GO:0016743">
    <property type="term" value="F:carboxyl- or carbamoyltransferase activity"/>
    <property type="evidence" value="ECO:0007669"/>
    <property type="project" value="UniProtKB-UniRule"/>
</dbReference>
<dbReference type="GO" id="GO:0006633">
    <property type="term" value="P:fatty acid biosynthetic process"/>
    <property type="evidence" value="ECO:0007669"/>
    <property type="project" value="UniProtKB-KW"/>
</dbReference>
<dbReference type="GO" id="GO:2001295">
    <property type="term" value="P:malonyl-CoA biosynthetic process"/>
    <property type="evidence" value="ECO:0007669"/>
    <property type="project" value="UniProtKB-UniRule"/>
</dbReference>
<dbReference type="Gene3D" id="3.90.226.10">
    <property type="entry name" value="2-enoyl-CoA Hydratase, Chain A, domain 1"/>
    <property type="match status" value="1"/>
</dbReference>
<dbReference type="HAMAP" id="MF_01395">
    <property type="entry name" value="AcetylCoA_CT_beta"/>
    <property type="match status" value="1"/>
</dbReference>
<dbReference type="InterPro" id="IPR034733">
    <property type="entry name" value="AcCoA_carboxyl_beta"/>
</dbReference>
<dbReference type="InterPro" id="IPR000438">
    <property type="entry name" value="Acetyl_CoA_COase_Trfase_b_su"/>
</dbReference>
<dbReference type="InterPro" id="IPR029045">
    <property type="entry name" value="ClpP/crotonase-like_dom_sf"/>
</dbReference>
<dbReference type="InterPro" id="IPR011762">
    <property type="entry name" value="COA_CT_N"/>
</dbReference>
<dbReference type="NCBIfam" id="TIGR00515">
    <property type="entry name" value="accD"/>
    <property type="match status" value="1"/>
</dbReference>
<dbReference type="PANTHER" id="PTHR42995">
    <property type="entry name" value="ACETYL-COENZYME A CARBOXYLASE CARBOXYL TRANSFERASE SUBUNIT BETA, CHLOROPLASTIC"/>
    <property type="match status" value="1"/>
</dbReference>
<dbReference type="PANTHER" id="PTHR42995:SF5">
    <property type="entry name" value="ACETYL-COENZYME A CARBOXYLASE CARBOXYL TRANSFERASE SUBUNIT BETA, CHLOROPLASTIC"/>
    <property type="match status" value="1"/>
</dbReference>
<dbReference type="Pfam" id="PF01039">
    <property type="entry name" value="Carboxyl_trans"/>
    <property type="match status" value="1"/>
</dbReference>
<dbReference type="PRINTS" id="PR01070">
    <property type="entry name" value="ACCCTRFRASEB"/>
</dbReference>
<dbReference type="SUPFAM" id="SSF52096">
    <property type="entry name" value="ClpP/crotonase"/>
    <property type="match status" value="1"/>
</dbReference>
<dbReference type="PROSITE" id="PS50980">
    <property type="entry name" value="COA_CT_NTER"/>
    <property type="match status" value="1"/>
</dbReference>
<reference key="1">
    <citation type="journal article" date="2009" name="Appl. Environ. Microbiol.">
        <title>Rhizobium sp. strain NGR234 possesses a remarkable number of secretion systems.</title>
        <authorList>
            <person name="Schmeisser C."/>
            <person name="Liesegang H."/>
            <person name="Krysciak D."/>
            <person name="Bakkou N."/>
            <person name="Le Quere A."/>
            <person name="Wollherr A."/>
            <person name="Heinemeyer I."/>
            <person name="Morgenstern B."/>
            <person name="Pommerening-Roeser A."/>
            <person name="Flores M."/>
            <person name="Palacios R."/>
            <person name="Brenner S."/>
            <person name="Gottschalk G."/>
            <person name="Schmitz R.A."/>
            <person name="Broughton W.J."/>
            <person name="Perret X."/>
            <person name="Strittmatter A.W."/>
            <person name="Streit W.R."/>
        </authorList>
    </citation>
    <scope>NUCLEOTIDE SEQUENCE [LARGE SCALE GENOMIC DNA]</scope>
    <source>
        <strain>NBRC 101917 / NGR234</strain>
    </source>
</reference>
<comment type="function">
    <text evidence="1">Component of the acetyl coenzyme A carboxylase (ACC) complex. Biotin carboxylase (BC) catalyzes the carboxylation of biotin on its carrier protein (BCCP) and then the CO(2) group is transferred by the transcarboxylase to acetyl-CoA to form malonyl-CoA.</text>
</comment>
<comment type="catalytic activity">
    <reaction evidence="1">
        <text>N(6)-carboxybiotinyl-L-lysyl-[protein] + acetyl-CoA = N(6)-biotinyl-L-lysyl-[protein] + malonyl-CoA</text>
        <dbReference type="Rhea" id="RHEA:54728"/>
        <dbReference type="Rhea" id="RHEA-COMP:10505"/>
        <dbReference type="Rhea" id="RHEA-COMP:10506"/>
        <dbReference type="ChEBI" id="CHEBI:57288"/>
        <dbReference type="ChEBI" id="CHEBI:57384"/>
        <dbReference type="ChEBI" id="CHEBI:83144"/>
        <dbReference type="ChEBI" id="CHEBI:83145"/>
        <dbReference type="EC" id="2.1.3.15"/>
    </reaction>
</comment>
<comment type="pathway">
    <text evidence="1">Lipid metabolism; malonyl-CoA biosynthesis; malonyl-CoA from acetyl-CoA: step 1/1.</text>
</comment>
<comment type="subunit">
    <text evidence="1">Acetyl-CoA carboxylase is a heterohexamer composed of biotin carboxyl carrier protein (AccB), biotin carboxylase (AccC) and two subunits each of ACCase subunit alpha (AccA) and ACCase subunit beta (AccD).</text>
</comment>
<comment type="subcellular location">
    <subcellularLocation>
        <location evidence="1">Cytoplasm</location>
    </subcellularLocation>
</comment>
<comment type="similarity">
    <text evidence="1">Belongs to the AccD/PCCB family.</text>
</comment>
<protein>
    <recommendedName>
        <fullName evidence="1">Acetyl-coenzyme A carboxylase carboxyl transferase subunit beta</fullName>
        <shortName evidence="1">ACCase subunit beta</shortName>
        <shortName evidence="1">Acetyl-CoA carboxylase carboxyltransferase subunit beta</shortName>
        <ecNumber evidence="1">2.1.3.15</ecNumber>
    </recommendedName>
</protein>